<name>RUBR2_METJA</name>
<protein>
    <recommendedName>
        <fullName>Probable Rubredoxin-2</fullName>
        <shortName>RD 2</shortName>
    </recommendedName>
</protein>
<proteinExistence type="inferred from homology"/>
<reference key="1">
    <citation type="journal article" date="1996" name="Science">
        <title>Complete genome sequence of the methanogenic archaeon, Methanococcus jannaschii.</title>
        <authorList>
            <person name="Bult C.J."/>
            <person name="White O."/>
            <person name="Olsen G.J."/>
            <person name="Zhou L."/>
            <person name="Fleischmann R.D."/>
            <person name="Sutton G.G."/>
            <person name="Blake J.A."/>
            <person name="FitzGerald L.M."/>
            <person name="Clayton R.A."/>
            <person name="Gocayne J.D."/>
            <person name="Kerlavage A.R."/>
            <person name="Dougherty B.A."/>
            <person name="Tomb J.-F."/>
            <person name="Adams M.D."/>
            <person name="Reich C.I."/>
            <person name="Overbeek R."/>
            <person name="Kirkness E.F."/>
            <person name="Weinstock K.G."/>
            <person name="Merrick J.M."/>
            <person name="Glodek A."/>
            <person name="Scott J.L."/>
            <person name="Geoghagen N.S.M."/>
            <person name="Weidman J.F."/>
            <person name="Fuhrmann J.L."/>
            <person name="Nguyen D."/>
            <person name="Utterback T.R."/>
            <person name="Kelley J.M."/>
            <person name="Peterson J.D."/>
            <person name="Sadow P.W."/>
            <person name="Hanna M.C."/>
            <person name="Cotton M.D."/>
            <person name="Roberts K.M."/>
            <person name="Hurst M.A."/>
            <person name="Kaine B.P."/>
            <person name="Borodovsky M."/>
            <person name="Klenk H.-P."/>
            <person name="Fraser C.M."/>
            <person name="Smith H.O."/>
            <person name="Woese C.R."/>
            <person name="Venter J.C."/>
        </authorList>
    </citation>
    <scope>NUCLEOTIDE SEQUENCE [LARGE SCALE GENOMIC DNA]</scope>
    <source>
        <strain>ATCC 43067 / DSM 2661 / JAL-1 / JCM 10045 / NBRC 100440</strain>
    </source>
</reference>
<accession>Q58150</accession>
<keyword id="KW-0249">Electron transport</keyword>
<keyword id="KW-0408">Iron</keyword>
<keyword id="KW-0479">Metal-binding</keyword>
<keyword id="KW-1185">Reference proteome</keyword>
<keyword id="KW-0813">Transport</keyword>
<gene>
    <name type="ordered locus">MJ0740</name>
</gene>
<sequence>MIEMARYQCMCGWVYDEDKGEPSQNIPPGTKFEDLPDTFRCPQCGLGKNAFRKID</sequence>
<comment type="function">
    <text evidence="1">Rubredoxin is a small nonheme, iron protein lacking acid-labile sulfide. Its single Fe, chelated to 4 Cys, functions as an electron acceptor and may also stabilize the conformation of the molecule (By similarity).</text>
</comment>
<comment type="cofactor">
    <cofactor evidence="1">
        <name>Fe(3+)</name>
        <dbReference type="ChEBI" id="CHEBI:29034"/>
    </cofactor>
    <text evidence="1">Binds 1 Fe(3+) ion per subunit.</text>
</comment>
<comment type="similarity">
    <text evidence="3">Belongs to the rubredoxin family.</text>
</comment>
<evidence type="ECO:0000250" key="1"/>
<evidence type="ECO:0000255" key="2">
    <source>
        <dbReference type="PROSITE-ProRule" id="PRU00241"/>
    </source>
</evidence>
<evidence type="ECO:0000305" key="3"/>
<feature type="chain" id="PRO_0000135059" description="Probable Rubredoxin-2">
    <location>
        <begin position="1"/>
        <end position="55"/>
    </location>
</feature>
<feature type="domain" description="Rubredoxin-like" evidence="2">
    <location>
        <begin position="4"/>
        <end position="54"/>
    </location>
</feature>
<feature type="binding site" evidence="2">
    <location>
        <position position="9"/>
    </location>
    <ligand>
        <name>Fe cation</name>
        <dbReference type="ChEBI" id="CHEBI:24875"/>
    </ligand>
</feature>
<feature type="binding site" evidence="2">
    <location>
        <position position="11"/>
    </location>
    <ligand>
        <name>Fe cation</name>
        <dbReference type="ChEBI" id="CHEBI:24875"/>
    </ligand>
</feature>
<feature type="binding site" evidence="2">
    <location>
        <position position="41"/>
    </location>
    <ligand>
        <name>Fe cation</name>
        <dbReference type="ChEBI" id="CHEBI:24875"/>
    </ligand>
</feature>
<feature type="binding site" evidence="2">
    <location>
        <position position="44"/>
    </location>
    <ligand>
        <name>Fe cation</name>
        <dbReference type="ChEBI" id="CHEBI:24875"/>
    </ligand>
</feature>
<dbReference type="EMBL" id="L77117">
    <property type="protein sequence ID" value="AAB98734.1"/>
    <property type="molecule type" value="Genomic_DNA"/>
</dbReference>
<dbReference type="PIR" id="D64392">
    <property type="entry name" value="D64392"/>
</dbReference>
<dbReference type="SMR" id="Q58150"/>
<dbReference type="FunCoup" id="Q58150">
    <property type="interactions" value="1"/>
</dbReference>
<dbReference type="STRING" id="243232.MJ_0740"/>
<dbReference type="PaxDb" id="243232-MJ_0740"/>
<dbReference type="EnsemblBacteria" id="AAB98734">
    <property type="protein sequence ID" value="AAB98734"/>
    <property type="gene ID" value="MJ_0740"/>
</dbReference>
<dbReference type="KEGG" id="mja:MJ_0740"/>
<dbReference type="eggNOG" id="arCOG04391">
    <property type="taxonomic scope" value="Archaea"/>
</dbReference>
<dbReference type="HOGENOM" id="CLU_128747_1_1_2"/>
<dbReference type="InParanoid" id="Q58150"/>
<dbReference type="PhylomeDB" id="Q58150"/>
<dbReference type="Proteomes" id="UP000000805">
    <property type="component" value="Chromosome"/>
</dbReference>
<dbReference type="GO" id="GO:0009055">
    <property type="term" value="F:electron transfer activity"/>
    <property type="evidence" value="ECO:0000318"/>
    <property type="project" value="GO_Central"/>
</dbReference>
<dbReference type="GO" id="GO:0005506">
    <property type="term" value="F:iron ion binding"/>
    <property type="evidence" value="ECO:0007669"/>
    <property type="project" value="InterPro"/>
</dbReference>
<dbReference type="GO" id="GO:0043448">
    <property type="term" value="P:alkane catabolic process"/>
    <property type="evidence" value="ECO:0000318"/>
    <property type="project" value="GO_Central"/>
</dbReference>
<dbReference type="CDD" id="cd00730">
    <property type="entry name" value="rubredoxin"/>
    <property type="match status" value="1"/>
</dbReference>
<dbReference type="FunFam" id="2.20.28.10:FF:000001">
    <property type="entry name" value="Rubredoxin"/>
    <property type="match status" value="1"/>
</dbReference>
<dbReference type="Gene3D" id="2.20.28.10">
    <property type="match status" value="1"/>
</dbReference>
<dbReference type="InterPro" id="IPR024922">
    <property type="entry name" value="Rubredoxin"/>
</dbReference>
<dbReference type="InterPro" id="IPR024934">
    <property type="entry name" value="Rubredoxin-like_dom"/>
</dbReference>
<dbReference type="InterPro" id="IPR024935">
    <property type="entry name" value="Rubredoxin_dom"/>
</dbReference>
<dbReference type="InterPro" id="IPR050526">
    <property type="entry name" value="Rubredoxin_ET"/>
</dbReference>
<dbReference type="PANTHER" id="PTHR47627">
    <property type="entry name" value="RUBREDOXIN"/>
    <property type="match status" value="1"/>
</dbReference>
<dbReference type="PANTHER" id="PTHR47627:SF1">
    <property type="entry name" value="RUBREDOXIN-1-RELATED"/>
    <property type="match status" value="1"/>
</dbReference>
<dbReference type="Pfam" id="PF00301">
    <property type="entry name" value="Rubredoxin"/>
    <property type="match status" value="1"/>
</dbReference>
<dbReference type="PIRSF" id="PIRSF000071">
    <property type="entry name" value="Rubredoxin"/>
    <property type="match status" value="1"/>
</dbReference>
<dbReference type="PRINTS" id="PR00163">
    <property type="entry name" value="RUBREDOXIN"/>
</dbReference>
<dbReference type="SUPFAM" id="SSF57802">
    <property type="entry name" value="Rubredoxin-like"/>
    <property type="match status" value="1"/>
</dbReference>
<dbReference type="PROSITE" id="PS50903">
    <property type="entry name" value="RUBREDOXIN_LIKE"/>
    <property type="match status" value="1"/>
</dbReference>
<organism>
    <name type="scientific">Methanocaldococcus jannaschii (strain ATCC 43067 / DSM 2661 / JAL-1 / JCM 10045 / NBRC 100440)</name>
    <name type="common">Methanococcus jannaschii</name>
    <dbReference type="NCBI Taxonomy" id="243232"/>
    <lineage>
        <taxon>Archaea</taxon>
        <taxon>Methanobacteriati</taxon>
        <taxon>Methanobacteriota</taxon>
        <taxon>Methanomada group</taxon>
        <taxon>Methanococci</taxon>
        <taxon>Methanococcales</taxon>
        <taxon>Methanocaldococcaceae</taxon>
        <taxon>Methanocaldococcus</taxon>
    </lineage>
</organism>